<keyword id="KW-0238">DNA-binding</keyword>
<keyword id="KW-0479">Metal-binding</keyword>
<keyword id="KW-0539">Nucleus</keyword>
<keyword id="KW-1185">Reference proteome</keyword>
<keyword id="KW-0677">Repeat</keyword>
<keyword id="KW-0804">Transcription</keyword>
<keyword id="KW-0805">Transcription regulation</keyword>
<keyword id="KW-0862">Zinc</keyword>
<keyword id="KW-0863">Zinc-finger</keyword>
<name>ZG42_XENLA</name>
<organism>
    <name type="scientific">Xenopus laevis</name>
    <name type="common">African clawed frog</name>
    <dbReference type="NCBI Taxonomy" id="8355"/>
    <lineage>
        <taxon>Eukaryota</taxon>
        <taxon>Metazoa</taxon>
        <taxon>Chordata</taxon>
        <taxon>Craniata</taxon>
        <taxon>Vertebrata</taxon>
        <taxon>Euteleostomi</taxon>
        <taxon>Amphibia</taxon>
        <taxon>Batrachia</taxon>
        <taxon>Anura</taxon>
        <taxon>Pipoidea</taxon>
        <taxon>Pipidae</taxon>
        <taxon>Xenopodinae</taxon>
        <taxon>Xenopus</taxon>
        <taxon>Xenopus</taxon>
    </lineage>
</organism>
<reference key="1">
    <citation type="journal article" date="1989" name="J. Mol. Biol.">
        <title>Second-order repeats in Xenopus laevis finger proteins.</title>
        <authorList>
            <person name="Nietfeld W."/>
            <person name="El-Baradi T."/>
            <person name="Mentzel H."/>
            <person name="Pieler T."/>
            <person name="Koester M."/>
            <person name="Poeting A."/>
            <person name="Knoechel W."/>
        </authorList>
    </citation>
    <scope>NUCLEOTIDE SEQUENCE</scope>
</reference>
<sequence length="168" mass="19187">TGEKPYSCSDCGKCFTRRWNLSEHRKSHTGQKRFCCSVCGKGFSYHSQMKSHYRTHTGEKPCICSECGKSFTDHAGLRIHQKYHTGVKPFSCSECGKCFTRRSGLTAHLRIHTGEKPYTCTECGKCFTCRTDLARHLRIHTENKPFTCSQCEKSFASHSDLDRHHCLP</sequence>
<comment type="function">
    <text>May be involved in transcriptional regulation.</text>
</comment>
<comment type="subcellular location">
    <subcellularLocation>
        <location evidence="2">Nucleus</location>
    </subcellularLocation>
</comment>
<comment type="similarity">
    <text evidence="2">Belongs to the krueppel C2H2-type zinc-finger protein family.</text>
</comment>
<feature type="chain" id="PRO_0000047793" description="Gastrula zinc finger protein XlCGF42.1">
    <location>
        <begin position="1" status="less than"/>
        <end position="168" status="greater than"/>
    </location>
</feature>
<feature type="zinc finger region" description="C2H2-type 1" evidence="1">
    <location>
        <begin position="6"/>
        <end position="28"/>
    </location>
</feature>
<feature type="zinc finger region" description="C2H2-type 2" evidence="1">
    <location>
        <begin position="34"/>
        <end position="56"/>
    </location>
</feature>
<feature type="zinc finger region" description="C2H2-type 3" evidence="1">
    <location>
        <begin position="62"/>
        <end position="84"/>
    </location>
</feature>
<feature type="zinc finger region" description="C2H2-type 4" evidence="1">
    <location>
        <begin position="90"/>
        <end position="112"/>
    </location>
</feature>
<feature type="zinc finger region" description="C2H2-type 5" evidence="1">
    <location>
        <begin position="118"/>
        <end position="140"/>
    </location>
</feature>
<feature type="zinc finger region" description="C2H2-type 6" evidence="1">
    <location>
        <begin position="146"/>
        <end position="165"/>
    </location>
</feature>
<feature type="non-terminal residue">
    <location>
        <position position="1"/>
    </location>
</feature>
<feature type="non-terminal residue">
    <location>
        <position position="168"/>
    </location>
</feature>
<proteinExistence type="inferred from homology"/>
<protein>
    <recommendedName>
        <fullName>Gastrula zinc finger protein XlCGF42.1</fullName>
    </recommendedName>
</protein>
<accession>P18720</accession>
<dbReference type="PIR" id="S06570">
    <property type="entry name" value="S06570"/>
</dbReference>
<dbReference type="SMR" id="P18720"/>
<dbReference type="Proteomes" id="UP000186698">
    <property type="component" value="Unplaced"/>
</dbReference>
<dbReference type="GO" id="GO:0005634">
    <property type="term" value="C:nucleus"/>
    <property type="evidence" value="ECO:0000318"/>
    <property type="project" value="GO_Central"/>
</dbReference>
<dbReference type="GO" id="GO:0001228">
    <property type="term" value="F:DNA-binding transcription activator activity, RNA polymerase II-specific"/>
    <property type="evidence" value="ECO:0000318"/>
    <property type="project" value="GO_Central"/>
</dbReference>
<dbReference type="GO" id="GO:0000978">
    <property type="term" value="F:RNA polymerase II cis-regulatory region sequence-specific DNA binding"/>
    <property type="evidence" value="ECO:0000318"/>
    <property type="project" value="GO_Central"/>
</dbReference>
<dbReference type="GO" id="GO:0008270">
    <property type="term" value="F:zinc ion binding"/>
    <property type="evidence" value="ECO:0007669"/>
    <property type="project" value="UniProtKB-KW"/>
</dbReference>
<dbReference type="GO" id="GO:0006357">
    <property type="term" value="P:regulation of transcription by RNA polymerase II"/>
    <property type="evidence" value="ECO:0000318"/>
    <property type="project" value="GO_Central"/>
</dbReference>
<dbReference type="FunFam" id="3.30.160.60:FF:002063">
    <property type="entry name" value="RB associated KRAB zinc finger"/>
    <property type="match status" value="1"/>
</dbReference>
<dbReference type="FunFam" id="3.30.160.60:FF:000478">
    <property type="entry name" value="Zinc finger protein 133"/>
    <property type="match status" value="1"/>
</dbReference>
<dbReference type="FunFam" id="3.30.160.60:FF:000358">
    <property type="entry name" value="zinc finger protein 24"/>
    <property type="match status" value="1"/>
</dbReference>
<dbReference type="FunFam" id="3.30.160.60:FF:001270">
    <property type="entry name" value="zinc finger protein 583 isoform X1"/>
    <property type="match status" value="1"/>
</dbReference>
<dbReference type="FunFam" id="3.30.160.60:FF:000624">
    <property type="entry name" value="zinc finger protein 697"/>
    <property type="match status" value="1"/>
</dbReference>
<dbReference type="FunFam" id="3.30.160.60:FF:001224">
    <property type="entry name" value="zinc finger protein 771-like"/>
    <property type="match status" value="1"/>
</dbReference>
<dbReference type="Gene3D" id="3.30.160.60">
    <property type="entry name" value="Classic Zinc Finger"/>
    <property type="match status" value="6"/>
</dbReference>
<dbReference type="InterPro" id="IPR041697">
    <property type="entry name" value="Znf-C2H2_11"/>
</dbReference>
<dbReference type="InterPro" id="IPR036236">
    <property type="entry name" value="Znf_C2H2_sf"/>
</dbReference>
<dbReference type="InterPro" id="IPR013087">
    <property type="entry name" value="Znf_C2H2_type"/>
</dbReference>
<dbReference type="PANTHER" id="PTHR24409">
    <property type="entry name" value="ZINC FINGER PROTEIN 142"/>
    <property type="match status" value="1"/>
</dbReference>
<dbReference type="PANTHER" id="PTHR24409:SF331">
    <property type="entry name" value="ZINC FINGER PROTEIN 322A"/>
    <property type="match status" value="1"/>
</dbReference>
<dbReference type="Pfam" id="PF00096">
    <property type="entry name" value="zf-C2H2"/>
    <property type="match status" value="5"/>
</dbReference>
<dbReference type="Pfam" id="PF16622">
    <property type="entry name" value="zf-C2H2_11"/>
    <property type="match status" value="1"/>
</dbReference>
<dbReference type="SMART" id="SM00355">
    <property type="entry name" value="ZnF_C2H2"/>
    <property type="match status" value="6"/>
</dbReference>
<dbReference type="SUPFAM" id="SSF57667">
    <property type="entry name" value="beta-beta-alpha zinc fingers"/>
    <property type="match status" value="4"/>
</dbReference>
<dbReference type="PROSITE" id="PS00028">
    <property type="entry name" value="ZINC_FINGER_C2H2_1"/>
    <property type="match status" value="5"/>
</dbReference>
<dbReference type="PROSITE" id="PS50157">
    <property type="entry name" value="ZINC_FINGER_C2H2_2"/>
    <property type="match status" value="6"/>
</dbReference>
<evidence type="ECO:0000255" key="1">
    <source>
        <dbReference type="PROSITE-ProRule" id="PRU00042"/>
    </source>
</evidence>
<evidence type="ECO:0000305" key="2"/>